<evidence type="ECO:0000255" key="1">
    <source>
        <dbReference type="HAMAP-Rule" id="MF_01392"/>
    </source>
</evidence>
<protein>
    <recommendedName>
        <fullName evidence="1">Cytochrome c biogenesis protein Ccs1</fullName>
    </recommendedName>
</protein>
<proteinExistence type="inferred from homology"/>
<sequence>MNYIIKFLNKLNNLTVAIIILLAIALASALGTVIEQNKNTDFYLKNYPLTKPLFNFVTSDLILKFGLDHVYTSWWFIFLIILLLLSLTLCTITRQLPALKLARLWQFYTNFNTKAKFQIRFKTNSSSLTKLTYYLEEKNYKIKHFNHFVYAYKGIFGRVSPIIVHFSLVIVLIGSMLSTTQGRTQEAFIVVNQEKPVLDTYEAYVNDFKIAYNSQGLIDQFYSDLILETRQASKIQKTIYVNEPLNYSNITIYQTDWNIDNLVICIDNQNYYSIPLQFIELPNGSESKYWINRLDLFGQSVFCVVNDLTGIVYLYNQNKDLICISSLGEFITLNGHTITFNKLVASTGLQFKLDSFIPLVYLGFLLLMISTLLSYISYSQVWLVKNGSTTYIFGSTNRAKFAFIKQLTEIANQC</sequence>
<organism>
    <name type="scientific">Guillardia theta</name>
    <name type="common">Cryptophyte</name>
    <name type="synonym">Cryptomonas phi</name>
    <dbReference type="NCBI Taxonomy" id="55529"/>
    <lineage>
        <taxon>Eukaryota</taxon>
        <taxon>Cryptophyceae</taxon>
        <taxon>Pyrenomonadales</taxon>
        <taxon>Geminigeraceae</taxon>
        <taxon>Guillardia</taxon>
    </lineage>
</organism>
<keyword id="KW-0150">Chloroplast</keyword>
<keyword id="KW-0201">Cytochrome c-type biogenesis</keyword>
<keyword id="KW-0472">Membrane</keyword>
<keyword id="KW-0934">Plastid</keyword>
<keyword id="KW-0793">Thylakoid</keyword>
<keyword id="KW-0812">Transmembrane</keyword>
<keyword id="KW-1133">Transmembrane helix</keyword>
<reference key="1">
    <citation type="journal article" date="1999" name="J. Mol. Evol.">
        <title>The plastid genome of the cryptophyte alga, Guillardia theta: complete sequence and conserved synteny groups confirm its common ancestry with red algae.</title>
        <authorList>
            <person name="Douglas S.E."/>
            <person name="Penny S.L."/>
        </authorList>
    </citation>
    <scope>NUCLEOTIDE SEQUENCE [LARGE SCALE GENOMIC DNA]</scope>
</reference>
<gene>
    <name evidence="1" type="primary">ccs1</name>
    <name type="synonym">ycf44</name>
</gene>
<dbReference type="EMBL" id="AF041468">
    <property type="protein sequence ID" value="AAC35622.1"/>
    <property type="molecule type" value="Genomic_DNA"/>
</dbReference>
<dbReference type="RefSeq" id="NP_050688.1">
    <property type="nucleotide sequence ID" value="NC_000926.1"/>
</dbReference>
<dbReference type="GeneID" id="856978"/>
<dbReference type="HOGENOM" id="CLU_034630_0_0_1"/>
<dbReference type="OMA" id="RFWIDYT"/>
<dbReference type="GO" id="GO:0009535">
    <property type="term" value="C:chloroplast thylakoid membrane"/>
    <property type="evidence" value="ECO:0007669"/>
    <property type="project" value="UniProtKB-SubCell"/>
</dbReference>
<dbReference type="GO" id="GO:0017004">
    <property type="term" value="P:cytochrome complex assembly"/>
    <property type="evidence" value="ECO:0007669"/>
    <property type="project" value="UniProtKB-UniRule"/>
</dbReference>
<dbReference type="HAMAP" id="MF_01392">
    <property type="entry name" value="CytC_Ccs1"/>
    <property type="match status" value="1"/>
</dbReference>
<dbReference type="InterPro" id="IPR023494">
    <property type="entry name" value="Cyt_c_bgen_Ccs1/CcsB/ResB"/>
</dbReference>
<dbReference type="InterPro" id="IPR007816">
    <property type="entry name" value="ResB-like_domain"/>
</dbReference>
<dbReference type="PANTHER" id="PTHR31566">
    <property type="entry name" value="CYTOCHROME C BIOGENESIS PROTEIN CCS1, CHLOROPLASTIC"/>
    <property type="match status" value="1"/>
</dbReference>
<dbReference type="PANTHER" id="PTHR31566:SF0">
    <property type="entry name" value="CYTOCHROME C BIOGENESIS PROTEIN CCS1, CHLOROPLASTIC"/>
    <property type="match status" value="1"/>
</dbReference>
<dbReference type="Pfam" id="PF05140">
    <property type="entry name" value="ResB"/>
    <property type="match status" value="2"/>
</dbReference>
<feature type="chain" id="PRO_0000217362" description="Cytochrome c biogenesis protein Ccs1">
    <location>
        <begin position="1"/>
        <end position="414"/>
    </location>
</feature>
<feature type="transmembrane region" description="Helical" evidence="1">
    <location>
        <begin position="14"/>
        <end position="34"/>
    </location>
</feature>
<feature type="transmembrane region" description="Helical" evidence="1">
    <location>
        <begin position="73"/>
        <end position="93"/>
    </location>
</feature>
<feature type="transmembrane region" description="Helical" evidence="1">
    <location>
        <begin position="159"/>
        <end position="179"/>
    </location>
</feature>
<name>CCS1_GUITH</name>
<geneLocation type="chloroplast"/>
<accession>O78437</accession>
<comment type="function">
    <text evidence="1">Required during biogenesis of c-type cytochromes (cytochrome c6 and cytochrome f) at the step of heme attachment.</text>
</comment>
<comment type="subunit">
    <text evidence="1">May interact with CcsA.</text>
</comment>
<comment type="subcellular location">
    <subcellularLocation>
        <location evidence="1">Plastid</location>
        <location evidence="1">Chloroplast thylakoid membrane</location>
        <topology evidence="1">Multi-pass membrane protein</topology>
    </subcellularLocation>
</comment>
<comment type="similarity">
    <text evidence="1">Belongs to the Ccs1/CcsB family.</text>
</comment>